<proteinExistence type="inferred from homology"/>
<organism>
    <name type="scientific">Escherichia coli O103:H2 (strain 12009 / EHEC)</name>
    <dbReference type="NCBI Taxonomy" id="585395"/>
    <lineage>
        <taxon>Bacteria</taxon>
        <taxon>Pseudomonadati</taxon>
        <taxon>Pseudomonadota</taxon>
        <taxon>Gammaproteobacteria</taxon>
        <taxon>Enterobacterales</taxon>
        <taxon>Enterobacteriaceae</taxon>
        <taxon>Escherichia</taxon>
    </lineage>
</organism>
<dbReference type="EC" id="1.14.99.46" evidence="1"/>
<dbReference type="EMBL" id="AP010958">
    <property type="protein sequence ID" value="BAI29903.1"/>
    <property type="molecule type" value="Genomic_DNA"/>
</dbReference>
<dbReference type="RefSeq" id="WP_001297176.1">
    <property type="nucleotide sequence ID" value="NC_013353.1"/>
</dbReference>
<dbReference type="SMR" id="C8U5H4"/>
<dbReference type="KEGG" id="eoh:ECO103_1058"/>
<dbReference type="HOGENOM" id="CLU_027853_1_1_6"/>
<dbReference type="GO" id="GO:0008726">
    <property type="term" value="F:alkanesulfonate monooxygenase activity"/>
    <property type="evidence" value="ECO:0007669"/>
    <property type="project" value="TreeGrafter"/>
</dbReference>
<dbReference type="GO" id="GO:0052614">
    <property type="term" value="F:uracil oxygenase activity"/>
    <property type="evidence" value="ECO:0007669"/>
    <property type="project" value="UniProtKB-EC"/>
</dbReference>
<dbReference type="GO" id="GO:0046306">
    <property type="term" value="P:alkanesulfonate catabolic process"/>
    <property type="evidence" value="ECO:0007669"/>
    <property type="project" value="TreeGrafter"/>
</dbReference>
<dbReference type="GO" id="GO:0019740">
    <property type="term" value="P:nitrogen utilization"/>
    <property type="evidence" value="ECO:0007669"/>
    <property type="project" value="UniProtKB-UniRule"/>
</dbReference>
<dbReference type="GO" id="GO:0006212">
    <property type="term" value="P:uracil catabolic process"/>
    <property type="evidence" value="ECO:0007669"/>
    <property type="project" value="UniProtKB-UniRule"/>
</dbReference>
<dbReference type="CDD" id="cd01094">
    <property type="entry name" value="Alkanesulfonate_monoxygenase"/>
    <property type="match status" value="1"/>
</dbReference>
<dbReference type="FunFam" id="3.20.20.30:FF:000003">
    <property type="entry name" value="Pyrimidine monooxygenase RutA"/>
    <property type="match status" value="1"/>
</dbReference>
<dbReference type="Gene3D" id="3.20.20.30">
    <property type="entry name" value="Luciferase-like domain"/>
    <property type="match status" value="1"/>
</dbReference>
<dbReference type="HAMAP" id="MF_01699">
    <property type="entry name" value="RutA"/>
    <property type="match status" value="1"/>
</dbReference>
<dbReference type="InterPro" id="IPR011251">
    <property type="entry name" value="Luciferase-like_dom"/>
</dbReference>
<dbReference type="InterPro" id="IPR036661">
    <property type="entry name" value="Luciferase-like_sf"/>
</dbReference>
<dbReference type="InterPro" id="IPR019914">
    <property type="entry name" value="Pyrimidine_monooxygenase_RutA"/>
</dbReference>
<dbReference type="InterPro" id="IPR050172">
    <property type="entry name" value="SsuD_RutA_monooxygenase"/>
</dbReference>
<dbReference type="NCBIfam" id="TIGR03612">
    <property type="entry name" value="RutA"/>
    <property type="match status" value="1"/>
</dbReference>
<dbReference type="PANTHER" id="PTHR42847">
    <property type="entry name" value="ALKANESULFONATE MONOOXYGENASE"/>
    <property type="match status" value="1"/>
</dbReference>
<dbReference type="PANTHER" id="PTHR42847:SF4">
    <property type="entry name" value="ALKANESULFONATE MONOOXYGENASE-RELATED"/>
    <property type="match status" value="1"/>
</dbReference>
<dbReference type="Pfam" id="PF00296">
    <property type="entry name" value="Bac_luciferase"/>
    <property type="match status" value="1"/>
</dbReference>
<dbReference type="SUPFAM" id="SSF51679">
    <property type="entry name" value="Bacterial luciferase-like"/>
    <property type="match status" value="1"/>
</dbReference>
<evidence type="ECO:0000255" key="1">
    <source>
        <dbReference type="HAMAP-Rule" id="MF_01699"/>
    </source>
</evidence>
<accession>C8U5H4</accession>
<comment type="function">
    <text evidence="1">Catalyzes the pyrimidine ring opening between N-3 and C-4 by an unusual flavin hydroperoxide-catalyzed mechanism, adding oxygen atoms in the process to yield ureidoacrylate peracid, that immediately reacts with FMN forming ureidoacrylate and FMN-N(5)-oxide. The FMN-N(5)-oxide reacts spontaneously with NADH to produce FMN. Requires the flavin reductase RutF to regenerate FMN in vivo.</text>
</comment>
<comment type="catalytic activity">
    <reaction evidence="1">
        <text>uracil + FMNH2 + NADH + O2 = (Z)-3-ureidoacrylate + FMN + NAD(+) + H2O + H(+)</text>
        <dbReference type="Rhea" id="RHEA:31587"/>
        <dbReference type="ChEBI" id="CHEBI:15377"/>
        <dbReference type="ChEBI" id="CHEBI:15378"/>
        <dbReference type="ChEBI" id="CHEBI:15379"/>
        <dbReference type="ChEBI" id="CHEBI:17568"/>
        <dbReference type="ChEBI" id="CHEBI:57540"/>
        <dbReference type="ChEBI" id="CHEBI:57618"/>
        <dbReference type="ChEBI" id="CHEBI:57945"/>
        <dbReference type="ChEBI" id="CHEBI:58210"/>
        <dbReference type="ChEBI" id="CHEBI:59891"/>
        <dbReference type="EC" id="1.14.99.46"/>
    </reaction>
</comment>
<comment type="catalytic activity">
    <reaction evidence="1">
        <text>thymine + FMNH2 + NADH + O2 = (Z)-2-methylureidoacrylate + FMN + NAD(+) + H2O + H(+)</text>
        <dbReference type="Rhea" id="RHEA:31599"/>
        <dbReference type="ChEBI" id="CHEBI:15377"/>
        <dbReference type="ChEBI" id="CHEBI:15378"/>
        <dbReference type="ChEBI" id="CHEBI:15379"/>
        <dbReference type="ChEBI" id="CHEBI:17821"/>
        <dbReference type="ChEBI" id="CHEBI:57540"/>
        <dbReference type="ChEBI" id="CHEBI:57618"/>
        <dbReference type="ChEBI" id="CHEBI:57945"/>
        <dbReference type="ChEBI" id="CHEBI:58210"/>
        <dbReference type="ChEBI" id="CHEBI:143783"/>
        <dbReference type="EC" id="1.14.99.46"/>
    </reaction>
</comment>
<comment type="induction">
    <text evidence="1">Up-regulated by the nitrogen regulatory protein C (NtrC also called GlnG) and repressed by RutR.</text>
</comment>
<comment type="similarity">
    <text evidence="1">Belongs to the NtaA/SnaA/DszA monooxygenase family. RutA subfamily.</text>
</comment>
<gene>
    <name evidence="1" type="primary">rutA</name>
    <name type="ordered locus">ECO103_1058</name>
</gene>
<keyword id="KW-0285">Flavoprotein</keyword>
<keyword id="KW-0288">FMN</keyword>
<keyword id="KW-0503">Monooxygenase</keyword>
<keyword id="KW-0521">NADP</keyword>
<keyword id="KW-0560">Oxidoreductase</keyword>
<name>RUTA_ECO10</name>
<sequence length="363" mass="39915">MKIGVFVPIGNNGWLISTHAPQYMPTFELNKAIVQKAEHYHFDFALSMIKLRGFGGKTEFWDHNLESFTLMAGLAAVTSRIQIYATAATLTLPPAIVARMAATIDSISGGRFGVNLVTGWQKPEYEQMGIWPGDDYFSRRYDYLTEYVQVLRDLWGTGKSDFKGDFFTMNDCRVSPQPSVPMKVICAGQSDAGMAFSAQYADFNFCFGKGVNTPTAFAPTAARMKQAAEQTGRDVGSYVLFMVIADETDDAARAKWEHYKAGADEEALSWLTEQSQKDTRSGTDTNVRQMADPTSAVNINMGTLVGSYASVARMLDEVASVPGAEGVLLTFDDFLSGIETFGERIQPLMQCRAHLPALTQEVA</sequence>
<protein>
    <recommendedName>
        <fullName evidence="1">Pyrimidine monooxygenase RutA</fullName>
        <ecNumber evidence="1">1.14.99.46</ecNumber>
    </recommendedName>
</protein>
<reference key="1">
    <citation type="journal article" date="2009" name="Proc. Natl. Acad. Sci. U.S.A.">
        <title>Comparative genomics reveal the mechanism of the parallel evolution of O157 and non-O157 enterohemorrhagic Escherichia coli.</title>
        <authorList>
            <person name="Ogura Y."/>
            <person name="Ooka T."/>
            <person name="Iguchi A."/>
            <person name="Toh H."/>
            <person name="Asadulghani M."/>
            <person name="Oshima K."/>
            <person name="Kodama T."/>
            <person name="Abe H."/>
            <person name="Nakayama K."/>
            <person name="Kurokawa K."/>
            <person name="Tobe T."/>
            <person name="Hattori M."/>
            <person name="Hayashi T."/>
        </authorList>
    </citation>
    <scope>NUCLEOTIDE SEQUENCE [LARGE SCALE GENOMIC DNA]</scope>
    <source>
        <strain>12009 / EHEC</strain>
    </source>
</reference>
<feature type="chain" id="PRO_0000402604" description="Pyrimidine monooxygenase RutA">
    <location>
        <begin position="1"/>
        <end position="363"/>
    </location>
</feature>
<feature type="binding site" evidence="1">
    <location>
        <begin position="49"/>
        <end position="50"/>
    </location>
    <ligand>
        <name>FMN</name>
        <dbReference type="ChEBI" id="CHEBI:58210"/>
    </ligand>
</feature>
<feature type="binding site" evidence="1">
    <location>
        <position position="115"/>
    </location>
    <ligand>
        <name>FMN</name>
        <dbReference type="ChEBI" id="CHEBI:58210"/>
    </ligand>
</feature>
<feature type="binding site" evidence="1">
    <location>
        <position position="124"/>
    </location>
    <ligand>
        <name>FMN</name>
        <dbReference type="ChEBI" id="CHEBI:58210"/>
    </ligand>
</feature>
<feature type="binding site" evidence="1">
    <location>
        <begin position="140"/>
        <end position="141"/>
    </location>
    <ligand>
        <name>FMN</name>
        <dbReference type="ChEBI" id="CHEBI:58210"/>
    </ligand>
</feature>
<feature type="binding site" evidence="1">
    <location>
        <position position="190"/>
    </location>
    <ligand>
        <name>FMN</name>
        <dbReference type="ChEBI" id="CHEBI:58210"/>
    </ligand>
</feature>